<evidence type="ECO:0000256" key="1">
    <source>
        <dbReference type="SAM" id="MobiDB-lite"/>
    </source>
</evidence>
<evidence type="ECO:0000269" key="2">
    <source>
    </source>
</evidence>
<evidence type="ECO:0000303" key="3">
    <source>
    </source>
</evidence>
<evidence type="ECO:0000305" key="4"/>
<evidence type="ECO:0000305" key="5">
    <source>
    </source>
</evidence>
<protein>
    <recommendedName>
        <fullName>Acetyl-coenzyme A transferase nodX</fullName>
        <ecNumber>2.-.-.-</ecNumber>
    </recommendedName>
    <alternativeName>
        <fullName evidence="3">Nodulisporic acid biosynthesis cluster protein X</fullName>
    </alternativeName>
</protein>
<organism>
    <name type="scientific">Hypoxylon pulicicidum</name>
    <dbReference type="NCBI Taxonomy" id="1243767"/>
    <lineage>
        <taxon>Eukaryota</taxon>
        <taxon>Fungi</taxon>
        <taxon>Dikarya</taxon>
        <taxon>Ascomycota</taxon>
        <taxon>Pezizomycotina</taxon>
        <taxon>Sordariomycetes</taxon>
        <taxon>Xylariomycetidae</taxon>
        <taxon>Xylariales</taxon>
        <taxon>Hypoxylaceae</taxon>
        <taxon>Hypoxylon</taxon>
    </lineage>
</organism>
<proteinExistence type="inferred from homology"/>
<sequence>MESSADNTVPKQAESVFIREILENPLMPNLPPELAEIAKFVSFEGNVKPSIPVNWRLAESISALKAFEATFLNYLAHRKYGVRPSNVSINTDHATLFLMSPMLTQIEDRGEVRPFSPFDTLTAELFPNRDKHRANASLQRALITNIYKTKDGRFYHTHGGMNPEPTLQALGLPVEGEVQDTSEVVTDRIQQRLSKYDATHLDHLLNEEHRQAGTIVYSSAEYFASEHGQKNGKVGLYEVIRDPNSSQPAAWWPDHPNAPSSPKRPLAGLKVVDLTRAIAGPTITRSLAEMGASVMRVTSPDITDMSVLHQDLNWGKWNSWLRLDVESDRQKLRDLILDADVVVDSYRPGVMKRFGFGYDEVFNLVRDRSRGIIYVRENCYGWYGPWSHRSGWQQISDACCGISTSYGHAMGLEEPVTPALFNSDYCTGICGSTAVLDALVQRAEKGGSYRVDVSINYYNQWLVRSVGTYDEHTWTDLFRRHDAPVFRHYHSMQYMLPKLLTALYKFDGEILFQREFFGPFRSGALNTTFIQVRPIARFKDDAIELKYNVGTRGNGVDAPTWPADLRREIVRDEDEQGSGFRSGSGLGSGSIAD</sequence>
<comment type="function">
    <text evidence="2 5">Acetyl-coenzyme A transferase; part of the gene cluster that mediates the biosynthesis of the indole diterpenes nodulisporic acids (NA). Nodulisporic acid A (NAA) and its chemically modified derivatives are of particular significance because of their highly potent insecticidal activity against blood-feeding arthropods and lack of observable adverse effects on mammals, in particular the tremogenicity associated with the paspaline-derived IDTs is not observed (PubMed:29283570). The geranylgeranyl diphosphate (GGPP) synthase ggs1, localized outside of the cluster, is proposed to catalyze the first step in nodulisporic acid biosynthesis via conversion of farnesyl pyrophosphate and isopentyl pyrophosphate into geranylgeranyl pyrophosphate (GGPP) (PubMed:29283570). Condensation of indole-3-glycerol phosphate with GGPP by the prenyl transferase nodC then forms 3-geranylgeranylindole (3-GGI) (PubMed:29283570). Epoxidation by the FAD-dependent monooxygenase nodM leads to a single-epoxidized-GGI that is substrate of the terpene cyclase nodB for cyclization to yield emindole SB (PubMed:29283570). The terminal methyl carbon, C28, of emindole SB is then oxidized by the cytochrome P450 monooxygenase nodW to produce nodulisporic acid F (NAF), the pentacyclic core of NAA (PubMed:29283570). NAF is converted to nodulisporic acid E (NAE) via prenylation. This step is probably performed by one of the indole diterpene prenyltransferases nodD1 or nodD2 (Probable). Several oxidation steps performed by the FAD-linked oxidoreductase nodO and one of the cytochrome P450 monooxygenase nodR, nodX or nodZ further convert NAE to nodulisporic acid D (NAD) (Probable). NAD is substrate of cytochrome P450 monooxygenase nodJ to produce the precursor of nodulisporic acid C (NAC), converted to NAC by one of the indole diterpene prenyltransferases nodD1 or nodD2 (Probable). The FAD-dependent monooxygenase nodY2 then oxidizes NAC to nodulisporic acid B (NAB) (Probable). Finally NAB is converted to NAA by one of the cytochrome P450 monooxygenases nodR, nodX or nodZ (Probable).</text>
</comment>
<comment type="pathway">
    <text evidence="5">Secondary metabolite biosynthesis.</text>
</comment>
<comment type="similarity">
    <text evidence="4">Belongs to the CoA-transferase III family.</text>
</comment>
<name>NODX_HYPPI</name>
<feature type="chain" id="PRO_0000446588" description="Acetyl-coenzyme A transferase nodX">
    <location>
        <begin position="1"/>
        <end position="593"/>
    </location>
</feature>
<feature type="region of interest" description="Disordered" evidence="1">
    <location>
        <begin position="572"/>
        <end position="593"/>
    </location>
</feature>
<feature type="compositionally biased region" description="Gly residues" evidence="1">
    <location>
        <begin position="580"/>
        <end position="593"/>
    </location>
</feature>
<reference key="1">
    <citation type="journal article" date="2018" name="J. Am. Chem. Soc.">
        <title>Heterologous biosynthesis of nodulisporic acid F.</title>
        <authorList>
            <person name="Van de Bittner K.C."/>
            <person name="Nicholson M.J."/>
            <person name="Bustamante L.Y."/>
            <person name="Kessans S.A."/>
            <person name="Ram A."/>
            <person name="van Dolleweerd C.J."/>
            <person name="Scott B."/>
            <person name="Parker E.J."/>
        </authorList>
    </citation>
    <scope>NUCLEOTIDE SEQUENCE [GENOMIC DNA]</scope>
    <scope>IDENTIFICATION</scope>
    <scope>FUNCTION</scope>
    <scope>PATHWAY</scope>
    <source>
        <strain>MF5954 / ATCC 74245</strain>
    </source>
</reference>
<dbReference type="EC" id="2.-.-.-"/>
<dbReference type="EMBL" id="MG182145">
    <property type="protein sequence ID" value="AUM60050.1"/>
    <property type="molecule type" value="Genomic_DNA"/>
</dbReference>
<dbReference type="SMR" id="A0A2I6PIZ1"/>
<dbReference type="GO" id="GO:0016746">
    <property type="term" value="F:acyltransferase activity"/>
    <property type="evidence" value="ECO:0007669"/>
    <property type="project" value="UniProtKB-KW"/>
</dbReference>
<dbReference type="Gene3D" id="3.40.50.10540">
    <property type="entry name" value="Crotonobetainyl-coa:carnitine coa-transferase, domain 1"/>
    <property type="match status" value="1"/>
</dbReference>
<dbReference type="InterPro" id="IPR052985">
    <property type="entry name" value="CoA-trans_III_biosynth/detox"/>
</dbReference>
<dbReference type="InterPro" id="IPR003673">
    <property type="entry name" value="CoA-Trfase_fam_III"/>
</dbReference>
<dbReference type="InterPro" id="IPR023606">
    <property type="entry name" value="CoA-Trfase_III_dom_1_sf"/>
</dbReference>
<dbReference type="PANTHER" id="PTHR48229">
    <property type="entry name" value="CAIB/BAIF FAMILY ENZYME (AFU_ORTHOLOGUE AFUA_1G05360)-RELATED"/>
    <property type="match status" value="1"/>
</dbReference>
<dbReference type="PANTHER" id="PTHR48229:SF2">
    <property type="entry name" value="CAIB_BAIF FAMILY PROTEIN"/>
    <property type="match status" value="1"/>
</dbReference>
<dbReference type="Pfam" id="PF02515">
    <property type="entry name" value="CoA_transf_3"/>
    <property type="match status" value="1"/>
</dbReference>
<dbReference type="SUPFAM" id="SSF89796">
    <property type="entry name" value="CoA-transferase family III (CaiB/BaiF)"/>
    <property type="match status" value="2"/>
</dbReference>
<keyword id="KW-0012">Acyltransferase</keyword>
<keyword id="KW-0808">Transferase</keyword>
<gene>
    <name evidence="3" type="primary">nodX</name>
</gene>
<accession>A0A2I6PIZ1</accession>